<protein>
    <recommendedName>
        <fullName evidence="2">Amidophosphoribosyltransferase</fullName>
        <shortName evidence="2">ATase</shortName>
        <ecNumber evidence="2">2.4.2.14</ecNumber>
    </recommendedName>
    <alternativeName>
        <fullName evidence="2">Glutamine phosphoribosylpyrophosphate amidotransferase</fullName>
        <shortName evidence="2">GPATase</shortName>
    </alternativeName>
</protein>
<dbReference type="EC" id="2.4.2.14" evidence="2"/>
<dbReference type="EMBL" id="CP000046">
    <property type="protein sequence ID" value="AAW37959.1"/>
    <property type="molecule type" value="Genomic_DNA"/>
</dbReference>
<dbReference type="RefSeq" id="WP_000483713.1">
    <property type="nucleotide sequence ID" value="NZ_JBGOFO010000002.1"/>
</dbReference>
<dbReference type="SMR" id="Q5HH14"/>
<dbReference type="MEROPS" id="C44.001"/>
<dbReference type="KEGG" id="sac:SACOL1079"/>
<dbReference type="HOGENOM" id="CLU_022389_3_1_9"/>
<dbReference type="UniPathway" id="UPA00074">
    <property type="reaction ID" value="UER00124"/>
</dbReference>
<dbReference type="Proteomes" id="UP000000530">
    <property type="component" value="Chromosome"/>
</dbReference>
<dbReference type="GO" id="GO:0004044">
    <property type="term" value="F:amidophosphoribosyltransferase activity"/>
    <property type="evidence" value="ECO:0007669"/>
    <property type="project" value="UniProtKB-UniRule"/>
</dbReference>
<dbReference type="GO" id="GO:0000287">
    <property type="term" value="F:magnesium ion binding"/>
    <property type="evidence" value="ECO:0007669"/>
    <property type="project" value="UniProtKB-UniRule"/>
</dbReference>
<dbReference type="GO" id="GO:0006189">
    <property type="term" value="P:'de novo' IMP biosynthetic process"/>
    <property type="evidence" value="ECO:0007669"/>
    <property type="project" value="UniProtKB-UniRule"/>
</dbReference>
<dbReference type="GO" id="GO:0009113">
    <property type="term" value="P:purine nucleobase biosynthetic process"/>
    <property type="evidence" value="ECO:0007669"/>
    <property type="project" value="InterPro"/>
</dbReference>
<dbReference type="CDD" id="cd00715">
    <property type="entry name" value="GPATase_N"/>
    <property type="match status" value="1"/>
</dbReference>
<dbReference type="CDD" id="cd06223">
    <property type="entry name" value="PRTases_typeI"/>
    <property type="match status" value="1"/>
</dbReference>
<dbReference type="Gene3D" id="3.40.50.2020">
    <property type="match status" value="1"/>
</dbReference>
<dbReference type="Gene3D" id="3.60.20.10">
    <property type="entry name" value="Glutamine Phosphoribosylpyrophosphate, subunit 1, domain 1"/>
    <property type="match status" value="1"/>
</dbReference>
<dbReference type="HAMAP" id="MF_01931">
    <property type="entry name" value="PurF"/>
    <property type="match status" value="1"/>
</dbReference>
<dbReference type="InterPro" id="IPR017932">
    <property type="entry name" value="GATase_2_dom"/>
</dbReference>
<dbReference type="InterPro" id="IPR029055">
    <property type="entry name" value="Ntn_hydrolases_N"/>
</dbReference>
<dbReference type="InterPro" id="IPR000836">
    <property type="entry name" value="PRibTrfase_dom"/>
</dbReference>
<dbReference type="InterPro" id="IPR029057">
    <property type="entry name" value="PRTase-like"/>
</dbReference>
<dbReference type="InterPro" id="IPR005854">
    <property type="entry name" value="PurF"/>
</dbReference>
<dbReference type="InterPro" id="IPR035584">
    <property type="entry name" value="PurF_N"/>
</dbReference>
<dbReference type="NCBIfam" id="TIGR01134">
    <property type="entry name" value="purF"/>
    <property type="match status" value="1"/>
</dbReference>
<dbReference type="PANTHER" id="PTHR11907">
    <property type="entry name" value="AMIDOPHOSPHORIBOSYLTRANSFERASE"/>
    <property type="match status" value="1"/>
</dbReference>
<dbReference type="Pfam" id="PF13537">
    <property type="entry name" value="GATase_7"/>
    <property type="match status" value="1"/>
</dbReference>
<dbReference type="Pfam" id="PF00156">
    <property type="entry name" value="Pribosyltran"/>
    <property type="match status" value="1"/>
</dbReference>
<dbReference type="PIRSF" id="PIRSF000485">
    <property type="entry name" value="Amd_phspho_trans"/>
    <property type="match status" value="1"/>
</dbReference>
<dbReference type="SUPFAM" id="SSF56235">
    <property type="entry name" value="N-terminal nucleophile aminohydrolases (Ntn hydrolases)"/>
    <property type="match status" value="1"/>
</dbReference>
<dbReference type="SUPFAM" id="SSF53271">
    <property type="entry name" value="PRTase-like"/>
    <property type="match status" value="1"/>
</dbReference>
<dbReference type="PROSITE" id="PS51278">
    <property type="entry name" value="GATASE_TYPE_2"/>
    <property type="match status" value="1"/>
</dbReference>
<dbReference type="PROSITE" id="PS00103">
    <property type="entry name" value="PUR_PYR_PR_TRANSFER"/>
    <property type="match status" value="1"/>
</dbReference>
<keyword id="KW-0315">Glutamine amidotransferase</keyword>
<keyword id="KW-0328">Glycosyltransferase</keyword>
<keyword id="KW-0460">Magnesium</keyword>
<keyword id="KW-0479">Metal-binding</keyword>
<keyword id="KW-0658">Purine biosynthesis</keyword>
<keyword id="KW-0808">Transferase</keyword>
<proteinExistence type="inferred from homology"/>
<accession>Q5HH14</accession>
<feature type="propeptide" id="PRO_0000045298" evidence="1">
    <location>
        <begin position="1"/>
        <end position="10"/>
    </location>
</feature>
<feature type="chain" id="PRO_0000045299" description="Amidophosphoribosyltransferase">
    <location>
        <begin position="11"/>
        <end position="494"/>
    </location>
</feature>
<feature type="domain" description="Glutamine amidotransferase type-2" evidence="2">
    <location>
        <begin position="11"/>
        <end position="231"/>
    </location>
</feature>
<feature type="active site" description="Nucleophile" evidence="2">
    <location>
        <position position="11"/>
    </location>
</feature>
<feature type="binding site" evidence="2">
    <location>
        <position position="294"/>
    </location>
    <ligand>
        <name>Mg(2+)</name>
        <dbReference type="ChEBI" id="CHEBI:18420"/>
    </ligand>
</feature>
<feature type="binding site" evidence="2">
    <location>
        <position position="356"/>
    </location>
    <ligand>
        <name>Mg(2+)</name>
        <dbReference type="ChEBI" id="CHEBI:18420"/>
    </ligand>
</feature>
<feature type="binding site" evidence="2">
    <location>
        <position position="357"/>
    </location>
    <ligand>
        <name>Mg(2+)</name>
        <dbReference type="ChEBI" id="CHEBI:18420"/>
    </ligand>
</feature>
<organism>
    <name type="scientific">Staphylococcus aureus (strain COL)</name>
    <dbReference type="NCBI Taxonomy" id="93062"/>
    <lineage>
        <taxon>Bacteria</taxon>
        <taxon>Bacillati</taxon>
        <taxon>Bacillota</taxon>
        <taxon>Bacilli</taxon>
        <taxon>Bacillales</taxon>
        <taxon>Staphylococcaceae</taxon>
        <taxon>Staphylococcus</taxon>
    </lineage>
</organism>
<comment type="function">
    <text evidence="2">Catalyzes the formation of phosphoribosylamine from phosphoribosylpyrophosphate (PRPP) and glutamine.</text>
</comment>
<comment type="catalytic activity">
    <reaction evidence="2">
        <text>5-phospho-beta-D-ribosylamine + L-glutamate + diphosphate = 5-phospho-alpha-D-ribose 1-diphosphate + L-glutamine + H2O</text>
        <dbReference type="Rhea" id="RHEA:14905"/>
        <dbReference type="ChEBI" id="CHEBI:15377"/>
        <dbReference type="ChEBI" id="CHEBI:29985"/>
        <dbReference type="ChEBI" id="CHEBI:33019"/>
        <dbReference type="ChEBI" id="CHEBI:58017"/>
        <dbReference type="ChEBI" id="CHEBI:58359"/>
        <dbReference type="ChEBI" id="CHEBI:58681"/>
        <dbReference type="EC" id="2.4.2.14"/>
    </reaction>
</comment>
<comment type="cofactor">
    <cofactor evidence="2">
        <name>Mg(2+)</name>
        <dbReference type="ChEBI" id="CHEBI:18420"/>
    </cofactor>
    <text evidence="2">Binds 1 Mg(2+) ion per subunit.</text>
</comment>
<comment type="pathway">
    <text evidence="2">Purine metabolism; IMP biosynthesis via de novo pathway; N(1)-(5-phospho-D-ribosyl)glycinamide from 5-phospho-alpha-D-ribose 1-diphosphate: step 1/2.</text>
</comment>
<comment type="similarity">
    <text evidence="2">In the C-terminal section; belongs to the purine/pyrimidine phosphoribosyltransferase family.</text>
</comment>
<name>PUR1_STAAC</name>
<evidence type="ECO:0000250" key="1"/>
<evidence type="ECO:0000255" key="2">
    <source>
        <dbReference type="HAMAP-Rule" id="MF_01931"/>
    </source>
</evidence>
<gene>
    <name evidence="2" type="primary">purF</name>
    <name type="ordered locus">SACOL1079</name>
</gene>
<sequence>MFNYSGLNEECGVFGIWNHPEAAQLTYMGLHSLQHRGQEGAGIVVSDQNELKGERGLGLLTEAIKDDQMERLKGYQHAIGHVRYATSGNKGIENIQPFLYHFYDMSVGICHNGNLINAKSLRQNLEKQGAIFHSSSDTEVIMHLIRRSKAPTFEEALKESLRKVKGGFTFAILTKDALYGAVDPNAIRPLVVGKMKDGTYILASETCAIDVLGAEFVQDIHAGEYVVINDKGITVKSYTHHTTTAISAMEYIYFARPDSTIAGKNVHAVRKASGKKLAQESPVNADMVIGVPNSSLSAASGYAEEIGLPYEMGLVKNQYVARTFIQPTQELREQGVRVKLSAVKDIVDGKNIILVDDSIVRGTTIRRIVKMLKDSGANKVHVRIASPEFMFPSFYGIDVSTTAELISASKSPEEIKDYIGADSLAYLSVDGLIESIGLDYDAPYSGLCVESFTGDYPAGLYDYEANYKAHLSHRQKQYISKNKHFFDSEGNLNV</sequence>
<reference key="1">
    <citation type="journal article" date="2005" name="J. Bacteriol.">
        <title>Insights on evolution of virulence and resistance from the complete genome analysis of an early methicillin-resistant Staphylococcus aureus strain and a biofilm-producing methicillin-resistant Staphylococcus epidermidis strain.</title>
        <authorList>
            <person name="Gill S.R."/>
            <person name="Fouts D.E."/>
            <person name="Archer G.L."/>
            <person name="Mongodin E.F."/>
            <person name="DeBoy R.T."/>
            <person name="Ravel J."/>
            <person name="Paulsen I.T."/>
            <person name="Kolonay J.F."/>
            <person name="Brinkac L.M."/>
            <person name="Beanan M.J."/>
            <person name="Dodson R.J."/>
            <person name="Daugherty S.C."/>
            <person name="Madupu R."/>
            <person name="Angiuoli S.V."/>
            <person name="Durkin A.S."/>
            <person name="Haft D.H."/>
            <person name="Vamathevan J.J."/>
            <person name="Khouri H."/>
            <person name="Utterback T.R."/>
            <person name="Lee C."/>
            <person name="Dimitrov G."/>
            <person name="Jiang L."/>
            <person name="Qin H."/>
            <person name="Weidman J."/>
            <person name="Tran K."/>
            <person name="Kang K.H."/>
            <person name="Hance I.R."/>
            <person name="Nelson K.E."/>
            <person name="Fraser C.M."/>
        </authorList>
    </citation>
    <scope>NUCLEOTIDE SEQUENCE [LARGE SCALE GENOMIC DNA]</scope>
    <source>
        <strain>COL</strain>
    </source>
</reference>